<sequence>MVKKNSSKAAPATIARNKRATFEYRFEEKMEAGLSLMGWEVKSIRMGKVNLSDCYVFLKNGEAFMHGCTIIPLNTASTHVVCDPLRLKKLLLSRKELDKLAGLVERQGYSIIPISMYWRKGAWVKVEIGLGKGKKDHDKREDTKAREWEVEKARVMKKEKTHG</sequence>
<evidence type="ECO:0000255" key="1">
    <source>
        <dbReference type="HAMAP-Rule" id="MF_00023"/>
    </source>
</evidence>
<protein>
    <recommendedName>
        <fullName evidence="1">SsrA-binding protein</fullName>
    </recommendedName>
    <alternativeName>
        <fullName evidence="1">Small protein B</fullName>
    </alternativeName>
</protein>
<reference key="1">
    <citation type="submission" date="2007-07" db="EMBL/GenBank/DDBJ databases">
        <title>Complete sequence of chromosome of Shewanella baltica OS185.</title>
        <authorList>
            <consortium name="US DOE Joint Genome Institute"/>
            <person name="Copeland A."/>
            <person name="Lucas S."/>
            <person name="Lapidus A."/>
            <person name="Barry K."/>
            <person name="Glavina del Rio T."/>
            <person name="Dalin E."/>
            <person name="Tice H."/>
            <person name="Pitluck S."/>
            <person name="Sims D."/>
            <person name="Brettin T."/>
            <person name="Bruce D."/>
            <person name="Detter J.C."/>
            <person name="Han C."/>
            <person name="Schmutz J."/>
            <person name="Larimer F."/>
            <person name="Land M."/>
            <person name="Hauser L."/>
            <person name="Kyrpides N."/>
            <person name="Mikhailova N."/>
            <person name="Brettar I."/>
            <person name="Rodrigues J."/>
            <person name="Konstantinidis K."/>
            <person name="Tiedje J."/>
            <person name="Richardson P."/>
        </authorList>
    </citation>
    <scope>NUCLEOTIDE SEQUENCE [LARGE SCALE GENOMIC DNA]</scope>
    <source>
        <strain>OS185</strain>
    </source>
</reference>
<comment type="function">
    <text evidence="1">Required for rescue of stalled ribosomes mediated by trans-translation. Binds to transfer-messenger RNA (tmRNA), required for stable association of tmRNA with ribosomes. tmRNA and SmpB together mimic tRNA shape, replacing the anticodon stem-loop with SmpB. tmRNA is encoded by the ssrA gene; the 2 termini fold to resemble tRNA(Ala) and it encodes a 'tag peptide', a short internal open reading frame. During trans-translation Ala-aminoacylated tmRNA acts like a tRNA, entering the A-site of stalled ribosomes, displacing the stalled mRNA. The ribosome then switches to translate the ORF on the tmRNA; the nascent peptide is terminated with the 'tag peptide' encoded by the tmRNA and targeted for degradation. The ribosome is freed to recommence translation, which seems to be the essential function of trans-translation.</text>
</comment>
<comment type="subcellular location">
    <subcellularLocation>
        <location evidence="1">Cytoplasm</location>
    </subcellularLocation>
    <text evidence="1">The tmRNA-SmpB complex associates with stalled 70S ribosomes.</text>
</comment>
<comment type="similarity">
    <text evidence="1">Belongs to the SmpB family.</text>
</comment>
<keyword id="KW-0963">Cytoplasm</keyword>
<keyword id="KW-0694">RNA-binding</keyword>
<dbReference type="EMBL" id="CP000753">
    <property type="protein sequence ID" value="ABS07448.1"/>
    <property type="molecule type" value="Genomic_DNA"/>
</dbReference>
<dbReference type="RefSeq" id="WP_006080832.1">
    <property type="nucleotide sequence ID" value="NC_009665.1"/>
</dbReference>
<dbReference type="SMR" id="A6WKV9"/>
<dbReference type="GeneID" id="11771594"/>
<dbReference type="KEGG" id="sbm:Shew185_1298"/>
<dbReference type="HOGENOM" id="CLU_108953_3_0_6"/>
<dbReference type="GO" id="GO:0005829">
    <property type="term" value="C:cytosol"/>
    <property type="evidence" value="ECO:0007669"/>
    <property type="project" value="TreeGrafter"/>
</dbReference>
<dbReference type="GO" id="GO:0003723">
    <property type="term" value="F:RNA binding"/>
    <property type="evidence" value="ECO:0007669"/>
    <property type="project" value="UniProtKB-UniRule"/>
</dbReference>
<dbReference type="GO" id="GO:0070929">
    <property type="term" value="P:trans-translation"/>
    <property type="evidence" value="ECO:0007669"/>
    <property type="project" value="UniProtKB-UniRule"/>
</dbReference>
<dbReference type="CDD" id="cd09294">
    <property type="entry name" value="SmpB"/>
    <property type="match status" value="1"/>
</dbReference>
<dbReference type="Gene3D" id="2.40.280.10">
    <property type="match status" value="1"/>
</dbReference>
<dbReference type="HAMAP" id="MF_00023">
    <property type="entry name" value="SmpB"/>
    <property type="match status" value="1"/>
</dbReference>
<dbReference type="InterPro" id="IPR023620">
    <property type="entry name" value="SmpB"/>
</dbReference>
<dbReference type="InterPro" id="IPR000037">
    <property type="entry name" value="SsrA-bd_prot"/>
</dbReference>
<dbReference type="InterPro" id="IPR020081">
    <property type="entry name" value="SsrA-bd_prot_CS"/>
</dbReference>
<dbReference type="NCBIfam" id="NF003843">
    <property type="entry name" value="PRK05422.1"/>
    <property type="match status" value="1"/>
</dbReference>
<dbReference type="NCBIfam" id="TIGR00086">
    <property type="entry name" value="smpB"/>
    <property type="match status" value="1"/>
</dbReference>
<dbReference type="PANTHER" id="PTHR30308:SF2">
    <property type="entry name" value="SSRA-BINDING PROTEIN"/>
    <property type="match status" value="1"/>
</dbReference>
<dbReference type="PANTHER" id="PTHR30308">
    <property type="entry name" value="TMRNA-BINDING COMPONENT OF TRANS-TRANSLATION TAGGING COMPLEX"/>
    <property type="match status" value="1"/>
</dbReference>
<dbReference type="Pfam" id="PF01668">
    <property type="entry name" value="SmpB"/>
    <property type="match status" value="1"/>
</dbReference>
<dbReference type="SUPFAM" id="SSF74982">
    <property type="entry name" value="Small protein B (SmpB)"/>
    <property type="match status" value="1"/>
</dbReference>
<dbReference type="PROSITE" id="PS01317">
    <property type="entry name" value="SSRP"/>
    <property type="match status" value="1"/>
</dbReference>
<organism>
    <name type="scientific">Shewanella baltica (strain OS185)</name>
    <dbReference type="NCBI Taxonomy" id="402882"/>
    <lineage>
        <taxon>Bacteria</taxon>
        <taxon>Pseudomonadati</taxon>
        <taxon>Pseudomonadota</taxon>
        <taxon>Gammaproteobacteria</taxon>
        <taxon>Alteromonadales</taxon>
        <taxon>Shewanellaceae</taxon>
        <taxon>Shewanella</taxon>
    </lineage>
</organism>
<proteinExistence type="inferred from homology"/>
<name>SSRP_SHEB8</name>
<feature type="chain" id="PRO_1000002138" description="SsrA-binding protein">
    <location>
        <begin position="1"/>
        <end position="163"/>
    </location>
</feature>
<accession>A6WKV9</accession>
<gene>
    <name evidence="1" type="primary">smpB</name>
    <name type="ordered locus">Shew185_1298</name>
</gene>